<dbReference type="EMBL" id="CP001341">
    <property type="protein sequence ID" value="ACL39981.1"/>
    <property type="molecule type" value="Genomic_DNA"/>
</dbReference>
<dbReference type="RefSeq" id="WP_015937199.1">
    <property type="nucleotide sequence ID" value="NC_011886.1"/>
</dbReference>
<dbReference type="SMR" id="B8H8V3"/>
<dbReference type="STRING" id="452863.Achl_2007"/>
<dbReference type="KEGG" id="ach:Achl_2007"/>
<dbReference type="eggNOG" id="COG0231">
    <property type="taxonomic scope" value="Bacteria"/>
</dbReference>
<dbReference type="HOGENOM" id="CLU_074944_0_1_11"/>
<dbReference type="OrthoDB" id="9801844at2"/>
<dbReference type="UniPathway" id="UPA00345"/>
<dbReference type="Proteomes" id="UP000002505">
    <property type="component" value="Chromosome"/>
</dbReference>
<dbReference type="GO" id="GO:0005737">
    <property type="term" value="C:cytoplasm"/>
    <property type="evidence" value="ECO:0007669"/>
    <property type="project" value="UniProtKB-SubCell"/>
</dbReference>
<dbReference type="GO" id="GO:0003746">
    <property type="term" value="F:translation elongation factor activity"/>
    <property type="evidence" value="ECO:0007669"/>
    <property type="project" value="UniProtKB-UniRule"/>
</dbReference>
<dbReference type="GO" id="GO:0043043">
    <property type="term" value="P:peptide biosynthetic process"/>
    <property type="evidence" value="ECO:0007669"/>
    <property type="project" value="InterPro"/>
</dbReference>
<dbReference type="CDD" id="cd04470">
    <property type="entry name" value="S1_EF-P_repeat_1"/>
    <property type="match status" value="1"/>
</dbReference>
<dbReference type="CDD" id="cd05794">
    <property type="entry name" value="S1_EF-P_repeat_2"/>
    <property type="match status" value="1"/>
</dbReference>
<dbReference type="FunFam" id="2.30.30.30:FF:000003">
    <property type="entry name" value="Elongation factor P"/>
    <property type="match status" value="1"/>
</dbReference>
<dbReference type="FunFam" id="2.40.50.140:FF:000004">
    <property type="entry name" value="Elongation factor P"/>
    <property type="match status" value="1"/>
</dbReference>
<dbReference type="FunFam" id="2.40.50.140:FF:000009">
    <property type="entry name" value="Elongation factor P"/>
    <property type="match status" value="1"/>
</dbReference>
<dbReference type="Gene3D" id="2.30.30.30">
    <property type="match status" value="1"/>
</dbReference>
<dbReference type="Gene3D" id="2.40.50.140">
    <property type="entry name" value="Nucleic acid-binding proteins"/>
    <property type="match status" value="2"/>
</dbReference>
<dbReference type="HAMAP" id="MF_00141">
    <property type="entry name" value="EF_P"/>
    <property type="match status" value="1"/>
</dbReference>
<dbReference type="InterPro" id="IPR015365">
    <property type="entry name" value="Elong-fact-P_C"/>
</dbReference>
<dbReference type="InterPro" id="IPR012340">
    <property type="entry name" value="NA-bd_OB-fold"/>
</dbReference>
<dbReference type="InterPro" id="IPR014722">
    <property type="entry name" value="Rib_uL2_dom2"/>
</dbReference>
<dbReference type="InterPro" id="IPR020599">
    <property type="entry name" value="Transl_elong_fac_P/YeiP"/>
</dbReference>
<dbReference type="InterPro" id="IPR013185">
    <property type="entry name" value="Transl_elong_KOW-like"/>
</dbReference>
<dbReference type="InterPro" id="IPR001059">
    <property type="entry name" value="Transl_elong_P/YeiP_cen"/>
</dbReference>
<dbReference type="InterPro" id="IPR011768">
    <property type="entry name" value="Transl_elongation_fac_P"/>
</dbReference>
<dbReference type="InterPro" id="IPR008991">
    <property type="entry name" value="Translation_prot_SH3-like_sf"/>
</dbReference>
<dbReference type="NCBIfam" id="TIGR00038">
    <property type="entry name" value="efp"/>
    <property type="match status" value="1"/>
</dbReference>
<dbReference type="NCBIfam" id="NF001810">
    <property type="entry name" value="PRK00529.1"/>
    <property type="match status" value="1"/>
</dbReference>
<dbReference type="PANTHER" id="PTHR30053">
    <property type="entry name" value="ELONGATION FACTOR P"/>
    <property type="match status" value="1"/>
</dbReference>
<dbReference type="PANTHER" id="PTHR30053:SF12">
    <property type="entry name" value="ELONGATION FACTOR P (EF-P) FAMILY PROTEIN"/>
    <property type="match status" value="1"/>
</dbReference>
<dbReference type="Pfam" id="PF01132">
    <property type="entry name" value="EFP"/>
    <property type="match status" value="1"/>
</dbReference>
<dbReference type="Pfam" id="PF08207">
    <property type="entry name" value="EFP_N"/>
    <property type="match status" value="1"/>
</dbReference>
<dbReference type="Pfam" id="PF09285">
    <property type="entry name" value="Elong-fact-P_C"/>
    <property type="match status" value="1"/>
</dbReference>
<dbReference type="PIRSF" id="PIRSF005901">
    <property type="entry name" value="EF-P"/>
    <property type="match status" value="1"/>
</dbReference>
<dbReference type="SMART" id="SM01185">
    <property type="entry name" value="EFP"/>
    <property type="match status" value="1"/>
</dbReference>
<dbReference type="SMART" id="SM00841">
    <property type="entry name" value="Elong-fact-P_C"/>
    <property type="match status" value="1"/>
</dbReference>
<dbReference type="SUPFAM" id="SSF50249">
    <property type="entry name" value="Nucleic acid-binding proteins"/>
    <property type="match status" value="2"/>
</dbReference>
<dbReference type="SUPFAM" id="SSF50104">
    <property type="entry name" value="Translation proteins SH3-like domain"/>
    <property type="match status" value="1"/>
</dbReference>
<reference key="1">
    <citation type="submission" date="2009-01" db="EMBL/GenBank/DDBJ databases">
        <title>Complete sequence of chromosome of Arthrobacter chlorophenolicus A6.</title>
        <authorList>
            <consortium name="US DOE Joint Genome Institute"/>
            <person name="Lucas S."/>
            <person name="Copeland A."/>
            <person name="Lapidus A."/>
            <person name="Glavina del Rio T."/>
            <person name="Tice H."/>
            <person name="Bruce D."/>
            <person name="Goodwin L."/>
            <person name="Pitluck S."/>
            <person name="Goltsman E."/>
            <person name="Clum A."/>
            <person name="Larimer F."/>
            <person name="Land M."/>
            <person name="Hauser L."/>
            <person name="Kyrpides N."/>
            <person name="Mikhailova N."/>
            <person name="Jansson J."/>
            <person name="Richardson P."/>
        </authorList>
    </citation>
    <scope>NUCLEOTIDE SEQUENCE [LARGE SCALE GENOMIC DNA]</scope>
    <source>
        <strain>ATCC 700700 / DSM 12829 / CIP 107037 / JCM 12360 / KCTC 9906 / NCIMB 13794 / A6</strain>
    </source>
</reference>
<feature type="chain" id="PRO_1000122986" description="Elongation factor P">
    <location>
        <begin position="1"/>
        <end position="187"/>
    </location>
</feature>
<proteinExistence type="inferred from homology"/>
<comment type="function">
    <text evidence="1">Involved in peptide bond synthesis. Stimulates efficient translation and peptide-bond synthesis on native or reconstituted 70S ribosomes in vitro. Probably functions indirectly by altering the affinity of the ribosome for aminoacyl-tRNA, thus increasing their reactivity as acceptors for peptidyl transferase.</text>
</comment>
<comment type="pathway">
    <text evidence="1">Protein biosynthesis; polypeptide chain elongation.</text>
</comment>
<comment type="subcellular location">
    <subcellularLocation>
        <location evidence="1">Cytoplasm</location>
    </subcellularLocation>
</comment>
<comment type="similarity">
    <text evidence="1">Belongs to the elongation factor P family.</text>
</comment>
<protein>
    <recommendedName>
        <fullName evidence="1">Elongation factor P</fullName>
        <shortName evidence="1">EF-P</shortName>
    </recommendedName>
</protein>
<evidence type="ECO:0000255" key="1">
    <source>
        <dbReference type="HAMAP-Rule" id="MF_00141"/>
    </source>
</evidence>
<name>EFP_PSECP</name>
<keyword id="KW-0963">Cytoplasm</keyword>
<keyword id="KW-0251">Elongation factor</keyword>
<keyword id="KW-0648">Protein biosynthesis</keyword>
<organism>
    <name type="scientific">Pseudarthrobacter chlorophenolicus (strain ATCC 700700 / DSM 12829 / CIP 107037 / JCM 12360 / KCTC 9906 / NCIMB 13794 / A6)</name>
    <name type="common">Arthrobacter chlorophenolicus</name>
    <dbReference type="NCBI Taxonomy" id="452863"/>
    <lineage>
        <taxon>Bacteria</taxon>
        <taxon>Bacillati</taxon>
        <taxon>Actinomycetota</taxon>
        <taxon>Actinomycetes</taxon>
        <taxon>Micrococcales</taxon>
        <taxon>Micrococcaceae</taxon>
        <taxon>Pseudarthrobacter</taxon>
    </lineage>
</organism>
<gene>
    <name evidence="1" type="primary">efp</name>
    <name type="ordered locus">Achl_2007</name>
</gene>
<sequence>MATTNDIKNGTVLKLEGQLWNIIEFQHVKPGKGGAFVRTKMRNVMSGKVVDKTFNAGLKIETATVDRRDYQYLYQDGADFVFMDTSDYDQITVSGATVGDATNFMLENQMVNIAIHEGNPLYIELPPSVVLEITYTEPGLQGDRSSAGTKPATLETGYEIQVPLFVENNTKVKVDTRDGSYLGRVTE</sequence>
<accession>B8H8V3</accession>